<sequence>MSTIRSIHAREILDSRGNPTLEAEVILEDGSFGRAAVPSGASTGTKEAVELRDGDKTRYLGKGVRKAVDNVNTTIAAALKGFEATDQAGLDRRLIDLDGTENKGRLGANALLGVSMAAAHAAAASNKQALWQYLAARTGVTPSLPVPMMNIINGGAHADNNVDFQEFMVLPVGFTSFSEALRAGTEIFHSLKSVLKGHGLSTAVGDEGGFAPDFRSNVEALDTILEAIGKAGYTAGEDVLLGLDVASSEFFENGKYNLVGENKRLTSEQFVDFLADWAAQYPIITIEDGLAENDWAGWKLLTDRIGKKVQLVGDDLFVTNPKIFQEGIDSGTANAILIKVNQIGTLSETLEAIAMADRAGYAAVVSHRSGETEDTTIADIAVATTATQIKTGSLCRSDRVAKYNQLLRIEEALGAGARYAGRDAFVSLKR</sequence>
<feature type="chain" id="PRO_1000115918" description="Enolase">
    <location>
        <begin position="1"/>
        <end position="430"/>
    </location>
</feature>
<feature type="active site" description="Proton donor" evidence="1">
    <location>
        <position position="207"/>
    </location>
</feature>
<feature type="active site" description="Proton acceptor" evidence="1">
    <location>
        <position position="339"/>
    </location>
</feature>
<feature type="binding site" evidence="1">
    <location>
        <position position="165"/>
    </location>
    <ligand>
        <name>(2R)-2-phosphoglycerate</name>
        <dbReference type="ChEBI" id="CHEBI:58289"/>
    </ligand>
</feature>
<feature type="binding site" evidence="1">
    <location>
        <position position="244"/>
    </location>
    <ligand>
        <name>Mg(2+)</name>
        <dbReference type="ChEBI" id="CHEBI:18420"/>
    </ligand>
</feature>
<feature type="binding site" evidence="1">
    <location>
        <position position="287"/>
    </location>
    <ligand>
        <name>Mg(2+)</name>
        <dbReference type="ChEBI" id="CHEBI:18420"/>
    </ligand>
</feature>
<feature type="binding site" evidence="1">
    <location>
        <position position="314"/>
    </location>
    <ligand>
        <name>Mg(2+)</name>
        <dbReference type="ChEBI" id="CHEBI:18420"/>
    </ligand>
</feature>
<feature type="binding site" evidence="1">
    <location>
        <position position="339"/>
    </location>
    <ligand>
        <name>(2R)-2-phosphoglycerate</name>
        <dbReference type="ChEBI" id="CHEBI:58289"/>
    </ligand>
</feature>
<feature type="binding site" evidence="1">
    <location>
        <position position="368"/>
    </location>
    <ligand>
        <name>(2R)-2-phosphoglycerate</name>
        <dbReference type="ChEBI" id="CHEBI:58289"/>
    </ligand>
</feature>
<feature type="binding site" evidence="1">
    <location>
        <position position="369"/>
    </location>
    <ligand>
        <name>(2R)-2-phosphoglycerate</name>
        <dbReference type="ChEBI" id="CHEBI:58289"/>
    </ligand>
</feature>
<feature type="binding site" evidence="1">
    <location>
        <position position="390"/>
    </location>
    <ligand>
        <name>(2R)-2-phosphoglycerate</name>
        <dbReference type="ChEBI" id="CHEBI:58289"/>
    </ligand>
</feature>
<protein>
    <recommendedName>
        <fullName evidence="1">Enolase</fullName>
        <ecNumber evidence="1">4.2.1.11</ecNumber>
    </recommendedName>
    <alternativeName>
        <fullName evidence="1">2-phospho-D-glycerate hydro-lyase</fullName>
    </alternativeName>
    <alternativeName>
        <fullName evidence="1">2-phosphoglycerate dehydratase</fullName>
    </alternativeName>
</protein>
<accession>B2FK88</accession>
<dbReference type="EC" id="4.2.1.11" evidence="1"/>
<dbReference type="EMBL" id="AM743169">
    <property type="protein sequence ID" value="CAQ45239.1"/>
    <property type="molecule type" value="Genomic_DNA"/>
</dbReference>
<dbReference type="RefSeq" id="WP_005409002.1">
    <property type="nucleotide sequence ID" value="NC_010943.1"/>
</dbReference>
<dbReference type="SMR" id="B2FK88"/>
<dbReference type="EnsemblBacteria" id="CAQ45239">
    <property type="protein sequence ID" value="CAQ45239"/>
    <property type="gene ID" value="Smlt1715"/>
</dbReference>
<dbReference type="GeneID" id="93832883"/>
<dbReference type="KEGG" id="sml:Smlt1715"/>
<dbReference type="eggNOG" id="COG0148">
    <property type="taxonomic scope" value="Bacteria"/>
</dbReference>
<dbReference type="HOGENOM" id="CLU_031223_2_1_6"/>
<dbReference type="UniPathway" id="UPA00109">
    <property type="reaction ID" value="UER00187"/>
</dbReference>
<dbReference type="Proteomes" id="UP000008840">
    <property type="component" value="Chromosome"/>
</dbReference>
<dbReference type="GO" id="GO:0009986">
    <property type="term" value="C:cell surface"/>
    <property type="evidence" value="ECO:0007669"/>
    <property type="project" value="UniProtKB-SubCell"/>
</dbReference>
<dbReference type="GO" id="GO:0005576">
    <property type="term" value="C:extracellular region"/>
    <property type="evidence" value="ECO:0007669"/>
    <property type="project" value="UniProtKB-SubCell"/>
</dbReference>
<dbReference type="GO" id="GO:0000015">
    <property type="term" value="C:phosphopyruvate hydratase complex"/>
    <property type="evidence" value="ECO:0007669"/>
    <property type="project" value="InterPro"/>
</dbReference>
<dbReference type="GO" id="GO:0000287">
    <property type="term" value="F:magnesium ion binding"/>
    <property type="evidence" value="ECO:0007669"/>
    <property type="project" value="UniProtKB-UniRule"/>
</dbReference>
<dbReference type="GO" id="GO:0004634">
    <property type="term" value="F:phosphopyruvate hydratase activity"/>
    <property type="evidence" value="ECO:0007669"/>
    <property type="project" value="UniProtKB-UniRule"/>
</dbReference>
<dbReference type="GO" id="GO:0006096">
    <property type="term" value="P:glycolytic process"/>
    <property type="evidence" value="ECO:0007669"/>
    <property type="project" value="UniProtKB-UniRule"/>
</dbReference>
<dbReference type="CDD" id="cd03313">
    <property type="entry name" value="enolase"/>
    <property type="match status" value="1"/>
</dbReference>
<dbReference type="FunFam" id="3.20.20.120:FF:000001">
    <property type="entry name" value="Enolase"/>
    <property type="match status" value="1"/>
</dbReference>
<dbReference type="FunFam" id="3.30.390.10:FF:000001">
    <property type="entry name" value="Enolase"/>
    <property type="match status" value="1"/>
</dbReference>
<dbReference type="Gene3D" id="3.20.20.120">
    <property type="entry name" value="Enolase-like C-terminal domain"/>
    <property type="match status" value="1"/>
</dbReference>
<dbReference type="Gene3D" id="3.30.390.10">
    <property type="entry name" value="Enolase-like, N-terminal domain"/>
    <property type="match status" value="1"/>
</dbReference>
<dbReference type="HAMAP" id="MF_00318">
    <property type="entry name" value="Enolase"/>
    <property type="match status" value="1"/>
</dbReference>
<dbReference type="InterPro" id="IPR000941">
    <property type="entry name" value="Enolase"/>
</dbReference>
<dbReference type="InterPro" id="IPR036849">
    <property type="entry name" value="Enolase-like_C_sf"/>
</dbReference>
<dbReference type="InterPro" id="IPR029017">
    <property type="entry name" value="Enolase-like_N"/>
</dbReference>
<dbReference type="InterPro" id="IPR020810">
    <property type="entry name" value="Enolase_C"/>
</dbReference>
<dbReference type="InterPro" id="IPR020809">
    <property type="entry name" value="Enolase_CS"/>
</dbReference>
<dbReference type="InterPro" id="IPR020811">
    <property type="entry name" value="Enolase_N"/>
</dbReference>
<dbReference type="NCBIfam" id="TIGR01060">
    <property type="entry name" value="eno"/>
    <property type="match status" value="1"/>
</dbReference>
<dbReference type="PANTHER" id="PTHR11902">
    <property type="entry name" value="ENOLASE"/>
    <property type="match status" value="1"/>
</dbReference>
<dbReference type="PANTHER" id="PTHR11902:SF1">
    <property type="entry name" value="ENOLASE"/>
    <property type="match status" value="1"/>
</dbReference>
<dbReference type="Pfam" id="PF00113">
    <property type="entry name" value="Enolase_C"/>
    <property type="match status" value="1"/>
</dbReference>
<dbReference type="Pfam" id="PF03952">
    <property type="entry name" value="Enolase_N"/>
    <property type="match status" value="1"/>
</dbReference>
<dbReference type="PIRSF" id="PIRSF001400">
    <property type="entry name" value="Enolase"/>
    <property type="match status" value="1"/>
</dbReference>
<dbReference type="PRINTS" id="PR00148">
    <property type="entry name" value="ENOLASE"/>
</dbReference>
<dbReference type="SFLD" id="SFLDF00002">
    <property type="entry name" value="enolase"/>
    <property type="match status" value="1"/>
</dbReference>
<dbReference type="SFLD" id="SFLDG00178">
    <property type="entry name" value="enolase"/>
    <property type="match status" value="1"/>
</dbReference>
<dbReference type="SMART" id="SM01192">
    <property type="entry name" value="Enolase_C"/>
    <property type="match status" value="1"/>
</dbReference>
<dbReference type="SMART" id="SM01193">
    <property type="entry name" value="Enolase_N"/>
    <property type="match status" value="1"/>
</dbReference>
<dbReference type="SUPFAM" id="SSF51604">
    <property type="entry name" value="Enolase C-terminal domain-like"/>
    <property type="match status" value="1"/>
</dbReference>
<dbReference type="SUPFAM" id="SSF54826">
    <property type="entry name" value="Enolase N-terminal domain-like"/>
    <property type="match status" value="1"/>
</dbReference>
<dbReference type="PROSITE" id="PS00164">
    <property type="entry name" value="ENOLASE"/>
    <property type="match status" value="1"/>
</dbReference>
<name>ENO_STRMK</name>
<comment type="function">
    <text evidence="1">Catalyzes the reversible conversion of 2-phosphoglycerate (2-PG) into phosphoenolpyruvate (PEP). It is essential for the degradation of carbohydrates via glycolysis.</text>
</comment>
<comment type="catalytic activity">
    <reaction evidence="1">
        <text>(2R)-2-phosphoglycerate = phosphoenolpyruvate + H2O</text>
        <dbReference type="Rhea" id="RHEA:10164"/>
        <dbReference type="ChEBI" id="CHEBI:15377"/>
        <dbReference type="ChEBI" id="CHEBI:58289"/>
        <dbReference type="ChEBI" id="CHEBI:58702"/>
        <dbReference type="EC" id="4.2.1.11"/>
    </reaction>
</comment>
<comment type="cofactor">
    <cofactor evidence="1">
        <name>Mg(2+)</name>
        <dbReference type="ChEBI" id="CHEBI:18420"/>
    </cofactor>
    <text evidence="1">Binds a second Mg(2+) ion via substrate during catalysis.</text>
</comment>
<comment type="pathway">
    <text evidence="1">Carbohydrate degradation; glycolysis; pyruvate from D-glyceraldehyde 3-phosphate: step 4/5.</text>
</comment>
<comment type="subunit">
    <text evidence="1">Component of the RNA degradosome, a multiprotein complex involved in RNA processing and mRNA degradation.</text>
</comment>
<comment type="subcellular location">
    <subcellularLocation>
        <location evidence="1">Cytoplasm</location>
    </subcellularLocation>
    <subcellularLocation>
        <location evidence="1">Secreted</location>
    </subcellularLocation>
    <subcellularLocation>
        <location evidence="1">Cell surface</location>
    </subcellularLocation>
    <text evidence="1">Fractions of enolase are present in both the cytoplasm and on the cell surface.</text>
</comment>
<comment type="similarity">
    <text evidence="1">Belongs to the enolase family.</text>
</comment>
<proteinExistence type="inferred from homology"/>
<keyword id="KW-0963">Cytoplasm</keyword>
<keyword id="KW-0324">Glycolysis</keyword>
<keyword id="KW-0456">Lyase</keyword>
<keyword id="KW-0460">Magnesium</keyword>
<keyword id="KW-0479">Metal-binding</keyword>
<keyword id="KW-1185">Reference proteome</keyword>
<keyword id="KW-0964">Secreted</keyword>
<evidence type="ECO:0000255" key="1">
    <source>
        <dbReference type="HAMAP-Rule" id="MF_00318"/>
    </source>
</evidence>
<organism>
    <name type="scientific">Stenotrophomonas maltophilia (strain K279a)</name>
    <dbReference type="NCBI Taxonomy" id="522373"/>
    <lineage>
        <taxon>Bacteria</taxon>
        <taxon>Pseudomonadati</taxon>
        <taxon>Pseudomonadota</taxon>
        <taxon>Gammaproteobacteria</taxon>
        <taxon>Lysobacterales</taxon>
        <taxon>Lysobacteraceae</taxon>
        <taxon>Stenotrophomonas</taxon>
        <taxon>Stenotrophomonas maltophilia group</taxon>
    </lineage>
</organism>
<reference key="1">
    <citation type="journal article" date="2008" name="Genome Biol.">
        <title>The complete genome, comparative and functional analysis of Stenotrophomonas maltophilia reveals an organism heavily shielded by drug resistance determinants.</title>
        <authorList>
            <person name="Crossman L.C."/>
            <person name="Gould V.C."/>
            <person name="Dow J.M."/>
            <person name="Vernikos G.S."/>
            <person name="Okazaki A."/>
            <person name="Sebaihia M."/>
            <person name="Saunders D."/>
            <person name="Arrowsmith C."/>
            <person name="Carver T."/>
            <person name="Peters N."/>
            <person name="Adlem E."/>
            <person name="Kerhornou A."/>
            <person name="Lord A."/>
            <person name="Murphy L."/>
            <person name="Seeger K."/>
            <person name="Squares R."/>
            <person name="Rutter S."/>
            <person name="Quail M.A."/>
            <person name="Rajandream M.A."/>
            <person name="Harris D."/>
            <person name="Churcher C."/>
            <person name="Bentley S.D."/>
            <person name="Parkhill J."/>
            <person name="Thomson N.R."/>
            <person name="Avison M.B."/>
        </authorList>
    </citation>
    <scope>NUCLEOTIDE SEQUENCE [LARGE SCALE GENOMIC DNA]</scope>
    <source>
        <strain>K279a</strain>
    </source>
</reference>
<gene>
    <name evidence="1" type="primary">eno</name>
    <name type="ordered locus">Smlt1715</name>
</gene>